<protein>
    <recommendedName>
        <fullName evidence="1">UPF0301 protein YqgE</fullName>
    </recommendedName>
</protein>
<organism>
    <name type="scientific">Escherichia coli (strain SE11)</name>
    <dbReference type="NCBI Taxonomy" id="409438"/>
    <lineage>
        <taxon>Bacteria</taxon>
        <taxon>Pseudomonadati</taxon>
        <taxon>Pseudomonadota</taxon>
        <taxon>Gammaproteobacteria</taxon>
        <taxon>Enterobacterales</taxon>
        <taxon>Enterobacteriaceae</taxon>
        <taxon>Escherichia</taxon>
    </lineage>
</organism>
<evidence type="ECO:0000255" key="1">
    <source>
        <dbReference type="HAMAP-Rule" id="MF_00758"/>
    </source>
</evidence>
<reference key="1">
    <citation type="journal article" date="2008" name="DNA Res.">
        <title>Complete genome sequence and comparative analysis of the wild-type commensal Escherichia coli strain SE11 isolated from a healthy adult.</title>
        <authorList>
            <person name="Oshima K."/>
            <person name="Toh H."/>
            <person name="Ogura Y."/>
            <person name="Sasamoto H."/>
            <person name="Morita H."/>
            <person name="Park S.-H."/>
            <person name="Ooka T."/>
            <person name="Iyoda S."/>
            <person name="Taylor T.D."/>
            <person name="Hayashi T."/>
            <person name="Itoh K."/>
            <person name="Hattori M."/>
        </authorList>
    </citation>
    <scope>NUCLEOTIDE SEQUENCE [LARGE SCALE GENOMIC DNA]</scope>
    <source>
        <strain>SE11</strain>
    </source>
</reference>
<dbReference type="EMBL" id="AP009240">
    <property type="protein sequence ID" value="BAG78740.1"/>
    <property type="molecule type" value="Genomic_DNA"/>
</dbReference>
<dbReference type="RefSeq" id="WP_001053178.1">
    <property type="nucleotide sequence ID" value="NC_011415.1"/>
</dbReference>
<dbReference type="SMR" id="B6I786"/>
<dbReference type="KEGG" id="ecy:ECSE_3216"/>
<dbReference type="HOGENOM" id="CLU_057596_1_0_6"/>
<dbReference type="Proteomes" id="UP000008199">
    <property type="component" value="Chromosome"/>
</dbReference>
<dbReference type="GO" id="GO:0005829">
    <property type="term" value="C:cytosol"/>
    <property type="evidence" value="ECO:0007669"/>
    <property type="project" value="TreeGrafter"/>
</dbReference>
<dbReference type="FunFam" id="3.30.70.1300:FF:000001">
    <property type="entry name" value="UPF0301 protein YqgE"/>
    <property type="match status" value="1"/>
</dbReference>
<dbReference type="Gene3D" id="3.40.1740.10">
    <property type="entry name" value="VC0467-like"/>
    <property type="match status" value="1"/>
</dbReference>
<dbReference type="Gene3D" id="3.30.70.1300">
    <property type="entry name" value="VC0467-like domains"/>
    <property type="match status" value="1"/>
</dbReference>
<dbReference type="HAMAP" id="MF_00758">
    <property type="entry name" value="UPF0301"/>
    <property type="match status" value="1"/>
</dbReference>
<dbReference type="InterPro" id="IPR003774">
    <property type="entry name" value="AlgH-like"/>
</dbReference>
<dbReference type="NCBIfam" id="NF001266">
    <property type="entry name" value="PRK00228.1-1"/>
    <property type="match status" value="1"/>
</dbReference>
<dbReference type="PANTHER" id="PTHR30327">
    <property type="entry name" value="UNCHARACTERIZED PROTEIN YQGE"/>
    <property type="match status" value="1"/>
</dbReference>
<dbReference type="PANTHER" id="PTHR30327:SF1">
    <property type="entry name" value="UPF0301 PROTEIN YQGE"/>
    <property type="match status" value="1"/>
</dbReference>
<dbReference type="Pfam" id="PF02622">
    <property type="entry name" value="DUF179"/>
    <property type="match status" value="1"/>
</dbReference>
<dbReference type="SUPFAM" id="SSF143456">
    <property type="entry name" value="VC0467-like"/>
    <property type="match status" value="1"/>
</dbReference>
<feature type="chain" id="PRO_1000198269" description="UPF0301 protein YqgE">
    <location>
        <begin position="1"/>
        <end position="187"/>
    </location>
</feature>
<gene>
    <name evidence="1" type="primary">yqgE</name>
    <name type="ordered locus">ECSE_3216</name>
</gene>
<sequence>MNLQHHFLIAMPALQDPIFRRSVVYICEHNTNGAMGIIVNKPLENLKIEGILEKLKITPEPRDESIRLDKPVMLGGPLAEDRGFILHTPPSNFASSIRISDNTVMTTSRDVLETLGTDKQPSDVLVALGYASWEKGQLEQEILDNAWLTAPADLNILFKTPIADRWREAAKLIGVDILTMPGVAGHA</sequence>
<proteinExistence type="inferred from homology"/>
<name>YQGE_ECOSE</name>
<accession>B6I786</accession>
<comment type="similarity">
    <text evidence="1">Belongs to the UPF0301 (AlgH) family.</text>
</comment>